<evidence type="ECO:0000255" key="1">
    <source>
        <dbReference type="HAMAP-Rule" id="MF_00113"/>
    </source>
</evidence>
<feature type="chain" id="PRO_0000231395" description="S-adenosylmethionine:tRNA ribosyltransferase-isomerase">
    <location>
        <begin position="1"/>
        <end position="342"/>
    </location>
</feature>
<organism>
    <name type="scientific">Zymomonas mobilis subsp. mobilis (strain ATCC 31821 / ZM4 / CP4)</name>
    <dbReference type="NCBI Taxonomy" id="264203"/>
    <lineage>
        <taxon>Bacteria</taxon>
        <taxon>Pseudomonadati</taxon>
        <taxon>Pseudomonadota</taxon>
        <taxon>Alphaproteobacteria</taxon>
        <taxon>Sphingomonadales</taxon>
        <taxon>Zymomonadaceae</taxon>
        <taxon>Zymomonas</taxon>
    </lineage>
</organism>
<name>QUEA_ZYMMO</name>
<keyword id="KW-0963">Cytoplasm</keyword>
<keyword id="KW-0671">Queuosine biosynthesis</keyword>
<keyword id="KW-1185">Reference proteome</keyword>
<keyword id="KW-0949">S-adenosyl-L-methionine</keyword>
<keyword id="KW-0808">Transferase</keyword>
<gene>
    <name evidence="1" type="primary">queA</name>
    <name type="ordered locus">ZMO0852</name>
</gene>
<proteinExistence type="inferred from homology"/>
<accession>Q5NP84</accession>
<dbReference type="EC" id="2.4.99.17" evidence="1"/>
<dbReference type="EMBL" id="AE008692">
    <property type="protein sequence ID" value="AAV89476.1"/>
    <property type="molecule type" value="Genomic_DNA"/>
</dbReference>
<dbReference type="RefSeq" id="WP_011240719.1">
    <property type="nucleotide sequence ID" value="NZ_CP035711.1"/>
</dbReference>
<dbReference type="SMR" id="Q5NP84"/>
<dbReference type="STRING" id="264203.ZMO0852"/>
<dbReference type="KEGG" id="zmo:ZMO0852"/>
<dbReference type="eggNOG" id="COG0809">
    <property type="taxonomic scope" value="Bacteria"/>
</dbReference>
<dbReference type="HOGENOM" id="CLU_039110_1_1_5"/>
<dbReference type="UniPathway" id="UPA00392"/>
<dbReference type="Proteomes" id="UP000001173">
    <property type="component" value="Chromosome"/>
</dbReference>
<dbReference type="GO" id="GO:0005737">
    <property type="term" value="C:cytoplasm"/>
    <property type="evidence" value="ECO:0007669"/>
    <property type="project" value="UniProtKB-SubCell"/>
</dbReference>
<dbReference type="GO" id="GO:0051075">
    <property type="term" value="F:S-adenosylmethionine:tRNA ribosyltransferase-isomerase activity"/>
    <property type="evidence" value="ECO:0007669"/>
    <property type="project" value="UniProtKB-EC"/>
</dbReference>
<dbReference type="GO" id="GO:0008616">
    <property type="term" value="P:queuosine biosynthetic process"/>
    <property type="evidence" value="ECO:0007669"/>
    <property type="project" value="UniProtKB-UniRule"/>
</dbReference>
<dbReference type="GO" id="GO:0002099">
    <property type="term" value="P:tRNA wobble guanine modification"/>
    <property type="evidence" value="ECO:0007669"/>
    <property type="project" value="TreeGrafter"/>
</dbReference>
<dbReference type="FunFam" id="3.40.1780.10:FF:000001">
    <property type="entry name" value="S-adenosylmethionine:tRNA ribosyltransferase-isomerase"/>
    <property type="match status" value="1"/>
</dbReference>
<dbReference type="Gene3D" id="2.40.10.240">
    <property type="entry name" value="QueA-like"/>
    <property type="match status" value="1"/>
</dbReference>
<dbReference type="Gene3D" id="3.40.1780.10">
    <property type="entry name" value="QueA-like"/>
    <property type="match status" value="1"/>
</dbReference>
<dbReference type="HAMAP" id="MF_00113">
    <property type="entry name" value="QueA"/>
    <property type="match status" value="1"/>
</dbReference>
<dbReference type="InterPro" id="IPR003699">
    <property type="entry name" value="QueA"/>
</dbReference>
<dbReference type="InterPro" id="IPR042118">
    <property type="entry name" value="QueA_dom1"/>
</dbReference>
<dbReference type="InterPro" id="IPR042119">
    <property type="entry name" value="QueA_dom2"/>
</dbReference>
<dbReference type="InterPro" id="IPR036100">
    <property type="entry name" value="QueA_sf"/>
</dbReference>
<dbReference type="NCBIfam" id="NF001140">
    <property type="entry name" value="PRK00147.1"/>
    <property type="match status" value="1"/>
</dbReference>
<dbReference type="NCBIfam" id="TIGR00113">
    <property type="entry name" value="queA"/>
    <property type="match status" value="1"/>
</dbReference>
<dbReference type="PANTHER" id="PTHR30307">
    <property type="entry name" value="S-ADENOSYLMETHIONINE:TRNA RIBOSYLTRANSFERASE-ISOMERASE"/>
    <property type="match status" value="1"/>
</dbReference>
<dbReference type="PANTHER" id="PTHR30307:SF0">
    <property type="entry name" value="S-ADENOSYLMETHIONINE:TRNA RIBOSYLTRANSFERASE-ISOMERASE"/>
    <property type="match status" value="1"/>
</dbReference>
<dbReference type="Pfam" id="PF02547">
    <property type="entry name" value="Queuosine_synth"/>
    <property type="match status" value="1"/>
</dbReference>
<dbReference type="SUPFAM" id="SSF111337">
    <property type="entry name" value="QueA-like"/>
    <property type="match status" value="1"/>
</dbReference>
<comment type="function">
    <text evidence="1">Transfers and isomerizes the ribose moiety from AdoMet to the 7-aminomethyl group of 7-deazaguanine (preQ1-tRNA) to give epoxyqueuosine (oQ-tRNA).</text>
</comment>
<comment type="catalytic activity">
    <reaction evidence="1">
        <text>7-aminomethyl-7-carbaguanosine(34) in tRNA + S-adenosyl-L-methionine = epoxyqueuosine(34) in tRNA + adenine + L-methionine + 2 H(+)</text>
        <dbReference type="Rhea" id="RHEA:32155"/>
        <dbReference type="Rhea" id="RHEA-COMP:10342"/>
        <dbReference type="Rhea" id="RHEA-COMP:18582"/>
        <dbReference type="ChEBI" id="CHEBI:15378"/>
        <dbReference type="ChEBI" id="CHEBI:16708"/>
        <dbReference type="ChEBI" id="CHEBI:57844"/>
        <dbReference type="ChEBI" id="CHEBI:59789"/>
        <dbReference type="ChEBI" id="CHEBI:82833"/>
        <dbReference type="ChEBI" id="CHEBI:194443"/>
        <dbReference type="EC" id="2.4.99.17"/>
    </reaction>
</comment>
<comment type="pathway">
    <text evidence="1">tRNA modification; tRNA-queuosine biosynthesis.</text>
</comment>
<comment type="subunit">
    <text evidence="1">Monomer.</text>
</comment>
<comment type="subcellular location">
    <subcellularLocation>
        <location evidence="1">Cytoplasm</location>
    </subcellularLocation>
</comment>
<comment type="similarity">
    <text evidence="1">Belongs to the QueA family.</text>
</comment>
<sequence>MRVDLFDFELPTESIALRPAVPRESARLLQVTSQEMDDYHVADLPNLLQEGDLLIFNDTRVIPAYLEGKKNQARISANMIKREGLRQWQAFVRNAKRLKSDDIVDFGQDVSARVVHRNDDGSVLFEFLGNEPVEILLERAGNMPLPPYIAHKRPADQQDRQDYQTIFAEKEGAVAAPTASLHFTEELLQRLEEKGVKHTKVTLHVGAGTFLPMKVEDSDDHVMHSEWGQISAETANAINETKKQGGRVIATGTTSLRLIESAADETGLVHPFSDETDIFITPGYRFRVIDGLMTNFHLPKSTLFMLVSALMGREKMLAAYQHAIDTGYRFYSYGDSSLLLPK</sequence>
<protein>
    <recommendedName>
        <fullName evidence="1">S-adenosylmethionine:tRNA ribosyltransferase-isomerase</fullName>
        <ecNumber evidence="1">2.4.99.17</ecNumber>
    </recommendedName>
    <alternativeName>
        <fullName evidence="1">Queuosine biosynthesis protein QueA</fullName>
    </alternativeName>
</protein>
<reference key="1">
    <citation type="journal article" date="2005" name="Nat. Biotechnol.">
        <title>The genome sequence of the ethanologenic bacterium Zymomonas mobilis ZM4.</title>
        <authorList>
            <person name="Seo J.-S."/>
            <person name="Chong H."/>
            <person name="Park H.S."/>
            <person name="Yoon K.-O."/>
            <person name="Jung C."/>
            <person name="Kim J.J."/>
            <person name="Hong J.H."/>
            <person name="Kim H."/>
            <person name="Kim J.-H."/>
            <person name="Kil J.-I."/>
            <person name="Park C.J."/>
            <person name="Oh H.-M."/>
            <person name="Lee J.-S."/>
            <person name="Jin S.-J."/>
            <person name="Um H.-W."/>
            <person name="Lee H.-J."/>
            <person name="Oh S.-J."/>
            <person name="Kim J.Y."/>
            <person name="Kang H.L."/>
            <person name="Lee S.Y."/>
            <person name="Lee K.J."/>
            <person name="Kang H.S."/>
        </authorList>
    </citation>
    <scope>NUCLEOTIDE SEQUENCE [LARGE SCALE GENOMIC DNA]</scope>
    <source>
        <strain>ATCC 31821 / ZM4 / CP4</strain>
    </source>
</reference>